<organism>
    <name type="scientific">Bacillus velezensis (strain DSM 23117 / BGSC 10A6 / LMG 26770 / FZB42)</name>
    <name type="common">Bacillus amyloliquefaciens subsp. plantarum</name>
    <dbReference type="NCBI Taxonomy" id="326423"/>
    <lineage>
        <taxon>Bacteria</taxon>
        <taxon>Bacillati</taxon>
        <taxon>Bacillota</taxon>
        <taxon>Bacilli</taxon>
        <taxon>Bacillales</taxon>
        <taxon>Bacillaceae</taxon>
        <taxon>Bacillus</taxon>
        <taxon>Bacillus amyloliquefaciens group</taxon>
    </lineage>
</organism>
<reference key="1">
    <citation type="journal article" date="2007" name="Nat. Biotechnol.">
        <title>Comparative analysis of the complete genome sequence of the plant growth-promoting bacterium Bacillus amyloliquefaciens FZB42.</title>
        <authorList>
            <person name="Chen X.H."/>
            <person name="Koumoutsi A."/>
            <person name="Scholz R."/>
            <person name="Eisenreich A."/>
            <person name="Schneider K."/>
            <person name="Heinemeyer I."/>
            <person name="Morgenstern B."/>
            <person name="Voss B."/>
            <person name="Hess W.R."/>
            <person name="Reva O."/>
            <person name="Junge H."/>
            <person name="Voigt B."/>
            <person name="Jungblut P.R."/>
            <person name="Vater J."/>
            <person name="Suessmuth R."/>
            <person name="Liesegang H."/>
            <person name="Strittmatter A."/>
            <person name="Gottschalk G."/>
            <person name="Borriss R."/>
        </authorList>
    </citation>
    <scope>NUCLEOTIDE SEQUENCE [LARGE SCALE GENOMIC DNA]</scope>
    <source>
        <strain>DSM 23117 / BGSC 10A6 / LMG 26770 / FZB42</strain>
    </source>
</reference>
<evidence type="ECO:0000255" key="1">
    <source>
        <dbReference type="HAMAP-Rule" id="MF_01249"/>
    </source>
</evidence>
<gene>
    <name evidence="1" type="primary">hprK</name>
    <name type="ordered locus">RBAM_032190</name>
</gene>
<comment type="function">
    <text evidence="1">Catalyzes the ATP- as well as the pyrophosphate-dependent phosphorylation of a specific serine residue in HPr, a phosphocarrier protein of the phosphoenolpyruvate-dependent sugar phosphotransferase system (PTS). HprK/P also catalyzes the pyrophosphate-producing, inorganic phosphate-dependent dephosphorylation (phosphorolysis) of seryl-phosphorylated HPr (P-Ser-HPr). The two antagonistic activities of HprK/P are regulated by several intracellular metabolites, which change their concentration in response to the absence or presence of rapidly metabolisable carbon sources (glucose, fructose, etc.) in the growth medium. Also phosphorylates/dephosphorylates the HPr-like catabolite repression protein crh on a specific serine residue. Therefore, by controlling the phosphorylation state of HPr and crh, HPrK/P is a sensor enzyme that plays a major role in the regulation of carbon metabolism and sugar transport: it mediates carbon catabolite repression (CCR), and regulates PTS-catalyzed carbohydrate uptake and inducer exclusion.</text>
</comment>
<comment type="catalytic activity">
    <reaction evidence="1">
        <text>[HPr protein]-L-serine + ATP = [HPr protein]-O-phospho-L-serine + ADP + H(+)</text>
        <dbReference type="Rhea" id="RHEA:46600"/>
        <dbReference type="Rhea" id="RHEA-COMP:11602"/>
        <dbReference type="Rhea" id="RHEA-COMP:11603"/>
        <dbReference type="ChEBI" id="CHEBI:15378"/>
        <dbReference type="ChEBI" id="CHEBI:29999"/>
        <dbReference type="ChEBI" id="CHEBI:30616"/>
        <dbReference type="ChEBI" id="CHEBI:83421"/>
        <dbReference type="ChEBI" id="CHEBI:456216"/>
    </reaction>
</comment>
<comment type="catalytic activity">
    <reaction evidence="1">
        <text>[HPr protein]-O-phospho-L-serine + phosphate + H(+) = [HPr protein]-L-serine + diphosphate</text>
        <dbReference type="Rhea" id="RHEA:46604"/>
        <dbReference type="Rhea" id="RHEA-COMP:11602"/>
        <dbReference type="Rhea" id="RHEA-COMP:11603"/>
        <dbReference type="ChEBI" id="CHEBI:15378"/>
        <dbReference type="ChEBI" id="CHEBI:29999"/>
        <dbReference type="ChEBI" id="CHEBI:33019"/>
        <dbReference type="ChEBI" id="CHEBI:43474"/>
        <dbReference type="ChEBI" id="CHEBI:83421"/>
    </reaction>
</comment>
<comment type="cofactor">
    <cofactor evidence="1">
        <name>Mg(2+)</name>
        <dbReference type="ChEBI" id="CHEBI:18420"/>
    </cofactor>
</comment>
<comment type="subunit">
    <text evidence="1">Homohexamer.</text>
</comment>
<comment type="domain">
    <text evidence="1">The Walker A ATP-binding motif also binds Pi and PPi.</text>
</comment>
<comment type="miscellaneous">
    <text evidence="1">Both phosphorylation and phosphorolysis are carried out by the same active site and suggest a common mechanism for both reactions.</text>
</comment>
<comment type="similarity">
    <text evidence="1">Belongs to the HPrK/P family.</text>
</comment>
<name>HPRK_BACVZ</name>
<feature type="chain" id="PRO_1000067120" description="HPr kinase/phosphorylase">
    <location>
        <begin position="1"/>
        <end position="310"/>
    </location>
</feature>
<feature type="region of interest" description="Important for the catalytic mechanism of both phosphorylation and dephosphorylation" evidence="1">
    <location>
        <begin position="201"/>
        <end position="210"/>
    </location>
</feature>
<feature type="region of interest" description="Important for the catalytic mechanism of dephosphorylation" evidence="1">
    <location>
        <begin position="264"/>
        <end position="269"/>
    </location>
</feature>
<feature type="active site" evidence="1">
    <location>
        <position position="138"/>
    </location>
</feature>
<feature type="active site" evidence="1">
    <location>
        <position position="159"/>
    </location>
</feature>
<feature type="active site" description="Proton acceptor; for phosphorylation activity. Proton donor; for dephosphorylation activity" evidence="1">
    <location>
        <position position="177"/>
    </location>
</feature>
<feature type="active site" evidence="1">
    <location>
        <position position="243"/>
    </location>
</feature>
<feature type="binding site" evidence="1">
    <location>
        <begin position="153"/>
        <end position="160"/>
    </location>
    <ligand>
        <name>ATP</name>
        <dbReference type="ChEBI" id="CHEBI:30616"/>
    </ligand>
</feature>
<feature type="binding site" evidence="1">
    <location>
        <position position="160"/>
    </location>
    <ligand>
        <name>Mg(2+)</name>
        <dbReference type="ChEBI" id="CHEBI:18420"/>
    </ligand>
</feature>
<feature type="binding site" evidence="1">
    <location>
        <position position="202"/>
    </location>
    <ligand>
        <name>Mg(2+)</name>
        <dbReference type="ChEBI" id="CHEBI:18420"/>
    </ligand>
</feature>
<proteinExistence type="inferred from homology"/>
<sequence length="310" mass="34679">MAKVRTKDVMEQFHLELISGEEGINRPITMSDLSRPGIEIAGYFTYYPRERVQLLGKTELSFFDQLPEEDKKQRMKSLCTDVTPAIILSRDMPIPPELVEASEQNGVPVLRSPLKTTRLSSRLTNFLESRLAPTTAIHGVLVDIYGVGVLITGKSGVGKSETALELVKRGHRLVADDCVEIRQEDQDTLVGNAPDLIEHLLEIRGLGIINVMTLFGAGAVRSNKRITIVMDLELWEQGKQYDRLGLEEEKMKIIDTEITKLTIPVRPGRNLAVIIEVAAMNFRLKRMGLNAAEQFTNKLADVIEDGEQDE</sequence>
<dbReference type="EC" id="2.7.11.-" evidence="1"/>
<dbReference type="EC" id="2.7.4.-" evidence="1"/>
<dbReference type="EMBL" id="CP000560">
    <property type="protein sequence ID" value="ABS75549.1"/>
    <property type="molecule type" value="Genomic_DNA"/>
</dbReference>
<dbReference type="RefSeq" id="WP_003151456.1">
    <property type="nucleotide sequence ID" value="NC_009725.2"/>
</dbReference>
<dbReference type="SMR" id="A7Z973"/>
<dbReference type="GeneID" id="93082364"/>
<dbReference type="KEGG" id="bay:RBAM_032190"/>
<dbReference type="HOGENOM" id="CLU_052030_0_1_9"/>
<dbReference type="Proteomes" id="UP000001120">
    <property type="component" value="Chromosome"/>
</dbReference>
<dbReference type="GO" id="GO:0005524">
    <property type="term" value="F:ATP binding"/>
    <property type="evidence" value="ECO:0007669"/>
    <property type="project" value="UniProtKB-UniRule"/>
</dbReference>
<dbReference type="GO" id="GO:0000287">
    <property type="term" value="F:magnesium ion binding"/>
    <property type="evidence" value="ECO:0007669"/>
    <property type="project" value="UniProtKB-UniRule"/>
</dbReference>
<dbReference type="GO" id="GO:0000155">
    <property type="term" value="F:phosphorelay sensor kinase activity"/>
    <property type="evidence" value="ECO:0007669"/>
    <property type="project" value="InterPro"/>
</dbReference>
<dbReference type="GO" id="GO:0004674">
    <property type="term" value="F:protein serine/threonine kinase activity"/>
    <property type="evidence" value="ECO:0007669"/>
    <property type="project" value="UniProtKB-KW"/>
</dbReference>
<dbReference type="GO" id="GO:0004712">
    <property type="term" value="F:protein serine/threonine/tyrosine kinase activity"/>
    <property type="evidence" value="ECO:0007669"/>
    <property type="project" value="UniProtKB-UniRule"/>
</dbReference>
<dbReference type="GO" id="GO:0006109">
    <property type="term" value="P:regulation of carbohydrate metabolic process"/>
    <property type="evidence" value="ECO:0007669"/>
    <property type="project" value="UniProtKB-UniRule"/>
</dbReference>
<dbReference type="CDD" id="cd01918">
    <property type="entry name" value="HprK_C"/>
    <property type="match status" value="1"/>
</dbReference>
<dbReference type="FunFam" id="3.40.1390.20:FF:000002">
    <property type="entry name" value="HPr kinase/phosphorylase"/>
    <property type="match status" value="1"/>
</dbReference>
<dbReference type="FunFam" id="3.40.50.300:FF:000174">
    <property type="entry name" value="HPr kinase/phosphorylase"/>
    <property type="match status" value="1"/>
</dbReference>
<dbReference type="Gene3D" id="3.40.1390.20">
    <property type="entry name" value="HprK N-terminal domain-like"/>
    <property type="match status" value="1"/>
</dbReference>
<dbReference type="Gene3D" id="3.40.50.300">
    <property type="entry name" value="P-loop containing nucleotide triphosphate hydrolases"/>
    <property type="match status" value="1"/>
</dbReference>
<dbReference type="HAMAP" id="MF_01249">
    <property type="entry name" value="HPr_kinase"/>
    <property type="match status" value="1"/>
</dbReference>
<dbReference type="InterPro" id="IPR003755">
    <property type="entry name" value="HPr(Ser)_kin/Pase"/>
</dbReference>
<dbReference type="InterPro" id="IPR011104">
    <property type="entry name" value="Hpr_kin/Pase_C"/>
</dbReference>
<dbReference type="InterPro" id="IPR011126">
    <property type="entry name" value="Hpr_kin/Pase_Hpr_N"/>
</dbReference>
<dbReference type="InterPro" id="IPR027417">
    <property type="entry name" value="P-loop_NTPase"/>
</dbReference>
<dbReference type="InterPro" id="IPR028979">
    <property type="entry name" value="Ser_kin/Pase_Hpr-like_N_sf"/>
</dbReference>
<dbReference type="NCBIfam" id="TIGR00679">
    <property type="entry name" value="hpr-ser"/>
    <property type="match status" value="1"/>
</dbReference>
<dbReference type="PANTHER" id="PTHR30305:SF1">
    <property type="entry name" value="HPR KINASE_PHOSPHORYLASE"/>
    <property type="match status" value="1"/>
</dbReference>
<dbReference type="PANTHER" id="PTHR30305">
    <property type="entry name" value="PROTEIN YJDM-RELATED"/>
    <property type="match status" value="1"/>
</dbReference>
<dbReference type="Pfam" id="PF07475">
    <property type="entry name" value="Hpr_kinase_C"/>
    <property type="match status" value="1"/>
</dbReference>
<dbReference type="Pfam" id="PF02603">
    <property type="entry name" value="Hpr_kinase_N"/>
    <property type="match status" value="1"/>
</dbReference>
<dbReference type="SUPFAM" id="SSF75138">
    <property type="entry name" value="HprK N-terminal domain-like"/>
    <property type="match status" value="1"/>
</dbReference>
<dbReference type="SUPFAM" id="SSF53795">
    <property type="entry name" value="PEP carboxykinase-like"/>
    <property type="match status" value="1"/>
</dbReference>
<protein>
    <recommendedName>
        <fullName evidence="1">HPr kinase/phosphorylase</fullName>
        <shortName evidence="1">HPrK/P</shortName>
        <ecNumber evidence="1">2.7.11.-</ecNumber>
        <ecNumber evidence="1">2.7.4.-</ecNumber>
    </recommendedName>
    <alternativeName>
        <fullName evidence="1">HPr(Ser) kinase/phosphorylase</fullName>
    </alternativeName>
</protein>
<accession>A7Z973</accession>
<keyword id="KW-0067">ATP-binding</keyword>
<keyword id="KW-0119">Carbohydrate metabolism</keyword>
<keyword id="KW-0418">Kinase</keyword>
<keyword id="KW-0460">Magnesium</keyword>
<keyword id="KW-0479">Metal-binding</keyword>
<keyword id="KW-0511">Multifunctional enzyme</keyword>
<keyword id="KW-0547">Nucleotide-binding</keyword>
<keyword id="KW-0723">Serine/threonine-protein kinase</keyword>
<keyword id="KW-0808">Transferase</keyword>